<keyword id="KW-0012">Acyltransferase</keyword>
<keyword id="KW-0056">Arginine metabolism</keyword>
<keyword id="KW-0808">Transferase</keyword>
<name>ASTA_ECOSM</name>
<dbReference type="EC" id="2.3.1.109" evidence="1"/>
<dbReference type="EMBL" id="CP000970">
    <property type="protein sequence ID" value="ACB17626.1"/>
    <property type="molecule type" value="Genomic_DNA"/>
</dbReference>
<dbReference type="RefSeq" id="WP_000989419.1">
    <property type="nucleotide sequence ID" value="NC_010498.1"/>
</dbReference>
<dbReference type="SMR" id="B1LDY4"/>
<dbReference type="GeneID" id="75171814"/>
<dbReference type="KEGG" id="ecm:EcSMS35_1444"/>
<dbReference type="HOGENOM" id="CLU_057655_0_0_6"/>
<dbReference type="UniPathway" id="UPA00185">
    <property type="reaction ID" value="UER00279"/>
</dbReference>
<dbReference type="Proteomes" id="UP000007011">
    <property type="component" value="Chromosome"/>
</dbReference>
<dbReference type="GO" id="GO:0008791">
    <property type="term" value="F:arginine N-succinyltransferase activity"/>
    <property type="evidence" value="ECO:0007669"/>
    <property type="project" value="UniProtKB-UniRule"/>
</dbReference>
<dbReference type="GO" id="GO:0019544">
    <property type="term" value="P:arginine catabolic process to glutamate"/>
    <property type="evidence" value="ECO:0007669"/>
    <property type="project" value="UniProtKB-UniRule"/>
</dbReference>
<dbReference type="GO" id="GO:0019545">
    <property type="term" value="P:arginine catabolic process to succinate"/>
    <property type="evidence" value="ECO:0007669"/>
    <property type="project" value="UniProtKB-UniRule"/>
</dbReference>
<dbReference type="Gene3D" id="2.40.40.20">
    <property type="match status" value="1"/>
</dbReference>
<dbReference type="Gene3D" id="3.40.630.30">
    <property type="match status" value="1"/>
</dbReference>
<dbReference type="HAMAP" id="MF_01171">
    <property type="entry name" value="AstA"/>
    <property type="match status" value="1"/>
</dbReference>
<dbReference type="InterPro" id="IPR016181">
    <property type="entry name" value="Acyl_CoA_acyltransferase"/>
</dbReference>
<dbReference type="InterPro" id="IPR007041">
    <property type="entry name" value="Arg_succinylTrfase_AstA/AruG"/>
</dbReference>
<dbReference type="InterPro" id="IPR017650">
    <property type="entry name" value="Arginine_N-succinylTrfase"/>
</dbReference>
<dbReference type="NCBIfam" id="TIGR03243">
    <property type="entry name" value="arg_catab_AOST"/>
    <property type="match status" value="1"/>
</dbReference>
<dbReference type="NCBIfam" id="TIGR03244">
    <property type="entry name" value="arg_catab_AstA"/>
    <property type="match status" value="1"/>
</dbReference>
<dbReference type="NCBIfam" id="NF007770">
    <property type="entry name" value="PRK10456.1"/>
    <property type="match status" value="1"/>
</dbReference>
<dbReference type="PANTHER" id="PTHR30420:SF1">
    <property type="entry name" value="ARGININE N-SUCCINYLTRANSFERASE"/>
    <property type="match status" value="1"/>
</dbReference>
<dbReference type="PANTHER" id="PTHR30420">
    <property type="entry name" value="N-SUCCINYLARGININE DIHYDROLASE"/>
    <property type="match status" value="1"/>
</dbReference>
<dbReference type="Pfam" id="PF04958">
    <property type="entry name" value="AstA"/>
    <property type="match status" value="1"/>
</dbReference>
<dbReference type="SUPFAM" id="SSF55729">
    <property type="entry name" value="Acyl-CoA N-acyltransferases (Nat)"/>
    <property type="match status" value="1"/>
</dbReference>
<proteinExistence type="inferred from homology"/>
<protein>
    <recommendedName>
        <fullName evidence="1">Arginine N-succinyltransferase</fullName>
        <shortName evidence="1">AST</shortName>
        <ecNumber evidence="1">2.3.1.109</ecNumber>
    </recommendedName>
    <alternativeName>
        <fullName evidence="1">AOST</fullName>
    </alternativeName>
</protein>
<gene>
    <name evidence="1" type="primary">astA</name>
    <name type="ordered locus">EcSMS35_1444</name>
</gene>
<reference key="1">
    <citation type="journal article" date="2008" name="J. Bacteriol.">
        <title>Insights into the environmental resistance gene pool from the genome sequence of the multidrug-resistant environmental isolate Escherichia coli SMS-3-5.</title>
        <authorList>
            <person name="Fricke W.F."/>
            <person name="Wright M.S."/>
            <person name="Lindell A.H."/>
            <person name="Harkins D.M."/>
            <person name="Baker-Austin C."/>
            <person name="Ravel J."/>
            <person name="Stepanauskas R."/>
        </authorList>
    </citation>
    <scope>NUCLEOTIDE SEQUENCE [LARGE SCALE GENOMIC DNA]</scope>
    <source>
        <strain>SMS-3-5 / SECEC</strain>
    </source>
</reference>
<feature type="chain" id="PRO_1000137982" description="Arginine N-succinyltransferase">
    <location>
        <begin position="1"/>
        <end position="344"/>
    </location>
</feature>
<feature type="active site" description="Proton donor" evidence="1">
    <location>
        <position position="229"/>
    </location>
</feature>
<feature type="binding site" evidence="1">
    <location>
        <position position="125"/>
    </location>
    <ligand>
        <name>succinyl-CoA</name>
        <dbReference type="ChEBI" id="CHEBI:57292"/>
    </ligand>
</feature>
<comment type="function">
    <text evidence="1">Catalyzes the transfer of succinyl-CoA to arginine to produce N(2)-succinylarginine.</text>
</comment>
<comment type="catalytic activity">
    <reaction evidence="1">
        <text>succinyl-CoA + L-arginine = N(2)-succinyl-L-arginine + CoA + H(+)</text>
        <dbReference type="Rhea" id="RHEA:15185"/>
        <dbReference type="ChEBI" id="CHEBI:15378"/>
        <dbReference type="ChEBI" id="CHEBI:32682"/>
        <dbReference type="ChEBI" id="CHEBI:57287"/>
        <dbReference type="ChEBI" id="CHEBI:57292"/>
        <dbReference type="ChEBI" id="CHEBI:58241"/>
        <dbReference type="EC" id="2.3.1.109"/>
    </reaction>
</comment>
<comment type="pathway">
    <text evidence="1">Amino-acid degradation; L-arginine degradation via AST pathway; L-glutamate and succinate from L-arginine: step 1/5.</text>
</comment>
<comment type="similarity">
    <text evidence="1">Belongs to the arginine N-succinyltransferase family.</text>
</comment>
<evidence type="ECO:0000255" key="1">
    <source>
        <dbReference type="HAMAP-Rule" id="MF_01171"/>
    </source>
</evidence>
<organism>
    <name type="scientific">Escherichia coli (strain SMS-3-5 / SECEC)</name>
    <dbReference type="NCBI Taxonomy" id="439855"/>
    <lineage>
        <taxon>Bacteria</taxon>
        <taxon>Pseudomonadati</taxon>
        <taxon>Pseudomonadota</taxon>
        <taxon>Gammaproteobacteria</taxon>
        <taxon>Enterobacterales</taxon>
        <taxon>Enterobacteriaceae</taxon>
        <taxon>Escherichia</taxon>
    </lineage>
</organism>
<accession>B1LDY4</accession>
<sequence length="344" mass="38456">MMVIRPVERSDVSALMQLASKTGGGLTSLPANEATLSARIERAIKTWQGELPKSEQGYVFVLEDSETGTVAGICAIEVAVGLNDPWYNYRVGTLVHASKELNVYNALPTLFLSNDHTGSSELCTLFLDPDWRKEGNGYLLSKSRFMFMAAFRDKFNDKVVAEMRGVIDEHGYSPFWQSLGKRFFSMDFSRADFLCGTGQKAFIAELMPKHPIYTHFLSQEAQDVIGQVHPQTAPARAVLEKEGFRYRNYIDIFDGGPTLECDIDRVRAIRKSRLVEVAEGQPAQGDFPACLVANENYHHFRVVLVRTDPATERLILTAAQLDALKCHAGDRVRLVRLCAEEKTA</sequence>